<proteinExistence type="inferred from homology"/>
<organism>
    <name type="scientific">Campylobacter jejuni subsp. jejuni serotype O:6 (strain 81116 / NCTC 11828)</name>
    <dbReference type="NCBI Taxonomy" id="407148"/>
    <lineage>
        <taxon>Bacteria</taxon>
        <taxon>Pseudomonadati</taxon>
        <taxon>Campylobacterota</taxon>
        <taxon>Epsilonproteobacteria</taxon>
        <taxon>Campylobacterales</taxon>
        <taxon>Campylobacteraceae</taxon>
        <taxon>Campylobacter</taxon>
    </lineage>
</organism>
<dbReference type="EC" id="3.5.4.16" evidence="1"/>
<dbReference type="EMBL" id="CP000814">
    <property type="protein sequence ID" value="ABV51782.1"/>
    <property type="molecule type" value="Genomic_DNA"/>
</dbReference>
<dbReference type="RefSeq" id="WP_002825654.1">
    <property type="nucleotide sequence ID" value="NC_009839.1"/>
</dbReference>
<dbReference type="SMR" id="A8FJZ5"/>
<dbReference type="KEGG" id="cju:C8J_0183"/>
<dbReference type="HOGENOM" id="CLU_049768_3_1_7"/>
<dbReference type="UniPathway" id="UPA00848">
    <property type="reaction ID" value="UER00151"/>
</dbReference>
<dbReference type="GO" id="GO:0005737">
    <property type="term" value="C:cytoplasm"/>
    <property type="evidence" value="ECO:0007669"/>
    <property type="project" value="TreeGrafter"/>
</dbReference>
<dbReference type="GO" id="GO:0005525">
    <property type="term" value="F:GTP binding"/>
    <property type="evidence" value="ECO:0007669"/>
    <property type="project" value="UniProtKB-KW"/>
</dbReference>
<dbReference type="GO" id="GO:0003934">
    <property type="term" value="F:GTP cyclohydrolase I activity"/>
    <property type="evidence" value="ECO:0007669"/>
    <property type="project" value="UniProtKB-UniRule"/>
</dbReference>
<dbReference type="GO" id="GO:0008270">
    <property type="term" value="F:zinc ion binding"/>
    <property type="evidence" value="ECO:0007669"/>
    <property type="project" value="UniProtKB-UniRule"/>
</dbReference>
<dbReference type="GO" id="GO:0006730">
    <property type="term" value="P:one-carbon metabolic process"/>
    <property type="evidence" value="ECO:0007669"/>
    <property type="project" value="UniProtKB-UniRule"/>
</dbReference>
<dbReference type="GO" id="GO:0006729">
    <property type="term" value="P:tetrahydrobiopterin biosynthetic process"/>
    <property type="evidence" value="ECO:0007669"/>
    <property type="project" value="TreeGrafter"/>
</dbReference>
<dbReference type="GO" id="GO:0046654">
    <property type="term" value="P:tetrahydrofolate biosynthetic process"/>
    <property type="evidence" value="ECO:0007669"/>
    <property type="project" value="UniProtKB-UniRule"/>
</dbReference>
<dbReference type="CDD" id="cd00642">
    <property type="entry name" value="GTP_cyclohydro1"/>
    <property type="match status" value="1"/>
</dbReference>
<dbReference type="FunFam" id="3.30.1130.10:FF:000001">
    <property type="entry name" value="GTP cyclohydrolase 1"/>
    <property type="match status" value="1"/>
</dbReference>
<dbReference type="Gene3D" id="1.10.286.10">
    <property type="match status" value="1"/>
</dbReference>
<dbReference type="Gene3D" id="3.30.1130.10">
    <property type="match status" value="1"/>
</dbReference>
<dbReference type="HAMAP" id="MF_00223">
    <property type="entry name" value="FolE"/>
    <property type="match status" value="1"/>
</dbReference>
<dbReference type="InterPro" id="IPR043133">
    <property type="entry name" value="GTP-CH-I_C/QueF"/>
</dbReference>
<dbReference type="InterPro" id="IPR043134">
    <property type="entry name" value="GTP-CH-I_N"/>
</dbReference>
<dbReference type="InterPro" id="IPR001474">
    <property type="entry name" value="GTP_CycHdrlase_I"/>
</dbReference>
<dbReference type="InterPro" id="IPR018234">
    <property type="entry name" value="GTP_CycHdrlase_I_CS"/>
</dbReference>
<dbReference type="InterPro" id="IPR020602">
    <property type="entry name" value="GTP_CycHdrlase_I_dom"/>
</dbReference>
<dbReference type="NCBIfam" id="TIGR00063">
    <property type="entry name" value="folE"/>
    <property type="match status" value="1"/>
</dbReference>
<dbReference type="NCBIfam" id="NF006825">
    <property type="entry name" value="PRK09347.1-2"/>
    <property type="match status" value="1"/>
</dbReference>
<dbReference type="NCBIfam" id="NF006826">
    <property type="entry name" value="PRK09347.1-3"/>
    <property type="match status" value="1"/>
</dbReference>
<dbReference type="PANTHER" id="PTHR11109:SF7">
    <property type="entry name" value="GTP CYCLOHYDROLASE 1"/>
    <property type="match status" value="1"/>
</dbReference>
<dbReference type="PANTHER" id="PTHR11109">
    <property type="entry name" value="GTP CYCLOHYDROLASE I"/>
    <property type="match status" value="1"/>
</dbReference>
<dbReference type="Pfam" id="PF01227">
    <property type="entry name" value="GTP_cyclohydroI"/>
    <property type="match status" value="1"/>
</dbReference>
<dbReference type="SUPFAM" id="SSF55620">
    <property type="entry name" value="Tetrahydrobiopterin biosynthesis enzymes-like"/>
    <property type="match status" value="1"/>
</dbReference>
<dbReference type="PROSITE" id="PS00859">
    <property type="entry name" value="GTP_CYCLOHYDROL_1_1"/>
    <property type="match status" value="1"/>
</dbReference>
<comment type="catalytic activity">
    <reaction evidence="1">
        <text>GTP + H2O = 7,8-dihydroneopterin 3'-triphosphate + formate + H(+)</text>
        <dbReference type="Rhea" id="RHEA:17473"/>
        <dbReference type="ChEBI" id="CHEBI:15377"/>
        <dbReference type="ChEBI" id="CHEBI:15378"/>
        <dbReference type="ChEBI" id="CHEBI:15740"/>
        <dbReference type="ChEBI" id="CHEBI:37565"/>
        <dbReference type="ChEBI" id="CHEBI:58462"/>
        <dbReference type="EC" id="3.5.4.16"/>
    </reaction>
</comment>
<comment type="pathway">
    <text evidence="1">Cofactor biosynthesis; 7,8-dihydroneopterin triphosphate biosynthesis; 7,8-dihydroneopterin triphosphate from GTP: step 1/1.</text>
</comment>
<comment type="subunit">
    <text evidence="1">Homomer.</text>
</comment>
<comment type="similarity">
    <text evidence="1">Belongs to the GTP cyclohydrolase I family.</text>
</comment>
<keyword id="KW-0342">GTP-binding</keyword>
<keyword id="KW-0378">Hydrolase</keyword>
<keyword id="KW-0479">Metal-binding</keyword>
<keyword id="KW-0547">Nucleotide-binding</keyword>
<keyword id="KW-0554">One-carbon metabolism</keyword>
<keyword id="KW-0862">Zinc</keyword>
<feature type="chain" id="PRO_1000071761" description="GTP cyclohydrolase 1">
    <location>
        <begin position="1"/>
        <end position="190"/>
    </location>
</feature>
<feature type="binding site" evidence="1">
    <location>
        <position position="75"/>
    </location>
    <ligand>
        <name>Zn(2+)</name>
        <dbReference type="ChEBI" id="CHEBI:29105"/>
    </ligand>
</feature>
<feature type="binding site" evidence="1">
    <location>
        <position position="78"/>
    </location>
    <ligand>
        <name>Zn(2+)</name>
        <dbReference type="ChEBI" id="CHEBI:29105"/>
    </ligand>
</feature>
<feature type="binding site" evidence="1">
    <location>
        <position position="146"/>
    </location>
    <ligand>
        <name>Zn(2+)</name>
        <dbReference type="ChEBI" id="CHEBI:29105"/>
    </ligand>
</feature>
<reference key="1">
    <citation type="journal article" date="2007" name="J. Bacteriol.">
        <title>The complete genome sequence of Campylobacter jejuni strain 81116 (NCTC11828).</title>
        <authorList>
            <person name="Pearson B.M."/>
            <person name="Gaskin D.J.H."/>
            <person name="Segers R.P.A.M."/>
            <person name="Wells J.M."/>
            <person name="Nuijten P.J.M."/>
            <person name="van Vliet A.H.M."/>
        </authorList>
    </citation>
    <scope>NUCLEOTIDE SEQUENCE [LARGE SCALE GENOMIC DNA]</scope>
    <source>
        <strain>81116 / NCTC 11828</strain>
    </source>
</reference>
<gene>
    <name evidence="1" type="primary">folE</name>
    <name type="ordered locus">C8J_0183</name>
</gene>
<name>GCH1_CAMJ8</name>
<sequence length="190" mass="21782">MQKKFEDCVKTILEIIGENPNREGLIKTPNRVFKAYEFLTSGYTQNVKEILNDALFESSNNEMVLVRDIEFYSLCEHHLLPFFGRAHVAYIPNKKVVGLSKIPRLVEVFARRLQIQEQLTEQIAQALMENVDAKGVGVVIEARHMCVEMRGVQKANSTTTTSALRGIFLKNEKTREEFFSLINSAKQVRF</sequence>
<evidence type="ECO:0000255" key="1">
    <source>
        <dbReference type="HAMAP-Rule" id="MF_00223"/>
    </source>
</evidence>
<accession>A8FJZ5</accession>
<protein>
    <recommendedName>
        <fullName evidence="1">GTP cyclohydrolase 1</fullName>
        <ecNumber evidence="1">3.5.4.16</ecNumber>
    </recommendedName>
    <alternativeName>
        <fullName evidence="1">GTP cyclohydrolase I</fullName>
        <shortName evidence="1">GTP-CH-I</shortName>
    </alternativeName>
</protein>